<organism>
    <name type="scientific">Gloeobacter violaceus (strain ATCC 29082 / PCC 7421)</name>
    <dbReference type="NCBI Taxonomy" id="251221"/>
    <lineage>
        <taxon>Bacteria</taxon>
        <taxon>Bacillati</taxon>
        <taxon>Cyanobacteriota</taxon>
        <taxon>Cyanophyceae</taxon>
        <taxon>Gloeobacterales</taxon>
        <taxon>Gloeobacteraceae</taxon>
        <taxon>Gloeobacter</taxon>
    </lineage>
</organism>
<feature type="chain" id="PRO_0000160361" description="ATP-dependent Clp protease ATP-binding subunit ClpX">
    <location>
        <begin position="1"/>
        <end position="437"/>
    </location>
</feature>
<feature type="domain" description="ClpX-type ZB" evidence="2">
    <location>
        <begin position="1"/>
        <end position="51"/>
    </location>
</feature>
<feature type="region of interest" description="Disordered" evidence="3">
    <location>
        <begin position="50"/>
        <end position="74"/>
    </location>
</feature>
<feature type="binding site" evidence="2">
    <location>
        <position position="10"/>
    </location>
    <ligand>
        <name>Zn(2+)</name>
        <dbReference type="ChEBI" id="CHEBI:29105"/>
    </ligand>
</feature>
<feature type="binding site" evidence="2">
    <location>
        <position position="13"/>
    </location>
    <ligand>
        <name>Zn(2+)</name>
        <dbReference type="ChEBI" id="CHEBI:29105"/>
    </ligand>
</feature>
<feature type="binding site" evidence="2">
    <location>
        <position position="32"/>
    </location>
    <ligand>
        <name>Zn(2+)</name>
        <dbReference type="ChEBI" id="CHEBI:29105"/>
    </ligand>
</feature>
<feature type="binding site" evidence="2">
    <location>
        <position position="35"/>
    </location>
    <ligand>
        <name>Zn(2+)</name>
        <dbReference type="ChEBI" id="CHEBI:29105"/>
    </ligand>
</feature>
<feature type="binding site" evidence="1">
    <location>
        <begin position="134"/>
        <end position="141"/>
    </location>
    <ligand>
        <name>ATP</name>
        <dbReference type="ChEBI" id="CHEBI:30616"/>
    </ligand>
</feature>
<protein>
    <recommendedName>
        <fullName evidence="1">ATP-dependent Clp protease ATP-binding subunit ClpX</fullName>
    </recommendedName>
</protein>
<dbReference type="EMBL" id="BA000045">
    <property type="protein sequence ID" value="BAC92137.1"/>
    <property type="molecule type" value="Genomic_DNA"/>
</dbReference>
<dbReference type="RefSeq" id="NP_927142.1">
    <property type="nucleotide sequence ID" value="NC_005125.1"/>
</dbReference>
<dbReference type="RefSeq" id="WP_011144180.1">
    <property type="nucleotide sequence ID" value="NC_005125.1"/>
</dbReference>
<dbReference type="SMR" id="Q7NDN9"/>
<dbReference type="FunCoup" id="Q7NDN9">
    <property type="interactions" value="275"/>
</dbReference>
<dbReference type="STRING" id="251221.gene:10761715"/>
<dbReference type="EnsemblBacteria" id="BAC92137">
    <property type="protein sequence ID" value="BAC92137"/>
    <property type="gene ID" value="BAC92137"/>
</dbReference>
<dbReference type="KEGG" id="gvi:glr4196"/>
<dbReference type="PATRIC" id="fig|251221.4.peg.4228"/>
<dbReference type="eggNOG" id="COG1219">
    <property type="taxonomic scope" value="Bacteria"/>
</dbReference>
<dbReference type="HOGENOM" id="CLU_014218_8_2_3"/>
<dbReference type="InParanoid" id="Q7NDN9"/>
<dbReference type="OrthoDB" id="9804062at2"/>
<dbReference type="PhylomeDB" id="Q7NDN9"/>
<dbReference type="Proteomes" id="UP000000557">
    <property type="component" value="Chromosome"/>
</dbReference>
<dbReference type="GO" id="GO:0009376">
    <property type="term" value="C:HslUV protease complex"/>
    <property type="evidence" value="ECO:0000318"/>
    <property type="project" value="GO_Central"/>
</dbReference>
<dbReference type="GO" id="GO:0005524">
    <property type="term" value="F:ATP binding"/>
    <property type="evidence" value="ECO:0000318"/>
    <property type="project" value="GO_Central"/>
</dbReference>
<dbReference type="GO" id="GO:0016887">
    <property type="term" value="F:ATP hydrolysis activity"/>
    <property type="evidence" value="ECO:0000318"/>
    <property type="project" value="GO_Central"/>
</dbReference>
<dbReference type="GO" id="GO:0140662">
    <property type="term" value="F:ATP-dependent protein folding chaperone"/>
    <property type="evidence" value="ECO:0007669"/>
    <property type="project" value="InterPro"/>
</dbReference>
<dbReference type="GO" id="GO:0046983">
    <property type="term" value="F:protein dimerization activity"/>
    <property type="evidence" value="ECO:0007669"/>
    <property type="project" value="InterPro"/>
</dbReference>
<dbReference type="GO" id="GO:0051082">
    <property type="term" value="F:unfolded protein binding"/>
    <property type="evidence" value="ECO:0007669"/>
    <property type="project" value="UniProtKB-UniRule"/>
</dbReference>
<dbReference type="GO" id="GO:0008270">
    <property type="term" value="F:zinc ion binding"/>
    <property type="evidence" value="ECO:0007669"/>
    <property type="project" value="InterPro"/>
</dbReference>
<dbReference type="GO" id="GO:0051301">
    <property type="term" value="P:cell division"/>
    <property type="evidence" value="ECO:0000318"/>
    <property type="project" value="GO_Central"/>
</dbReference>
<dbReference type="GO" id="GO:0051603">
    <property type="term" value="P:proteolysis involved in protein catabolic process"/>
    <property type="evidence" value="ECO:0000318"/>
    <property type="project" value="GO_Central"/>
</dbReference>
<dbReference type="CDD" id="cd19497">
    <property type="entry name" value="RecA-like_ClpX"/>
    <property type="match status" value="1"/>
</dbReference>
<dbReference type="FunFam" id="1.10.8.60:FF:000002">
    <property type="entry name" value="ATP-dependent Clp protease ATP-binding subunit ClpX"/>
    <property type="match status" value="1"/>
</dbReference>
<dbReference type="FunFam" id="3.40.50.300:FF:000005">
    <property type="entry name" value="ATP-dependent Clp protease ATP-binding subunit ClpX"/>
    <property type="match status" value="1"/>
</dbReference>
<dbReference type="Gene3D" id="1.10.8.60">
    <property type="match status" value="1"/>
</dbReference>
<dbReference type="Gene3D" id="6.20.220.10">
    <property type="entry name" value="ClpX chaperone, C4-type zinc finger domain"/>
    <property type="match status" value="1"/>
</dbReference>
<dbReference type="Gene3D" id="3.40.50.300">
    <property type="entry name" value="P-loop containing nucleotide triphosphate hydrolases"/>
    <property type="match status" value="1"/>
</dbReference>
<dbReference type="HAMAP" id="MF_00175">
    <property type="entry name" value="ClpX"/>
    <property type="match status" value="1"/>
</dbReference>
<dbReference type="InterPro" id="IPR003593">
    <property type="entry name" value="AAA+_ATPase"/>
</dbReference>
<dbReference type="InterPro" id="IPR050052">
    <property type="entry name" value="ATP-dep_Clp_protease_ClpX"/>
</dbReference>
<dbReference type="InterPro" id="IPR003959">
    <property type="entry name" value="ATPase_AAA_core"/>
</dbReference>
<dbReference type="InterPro" id="IPR019489">
    <property type="entry name" value="Clp_ATPase_C"/>
</dbReference>
<dbReference type="InterPro" id="IPR004487">
    <property type="entry name" value="Clp_protease_ATP-bd_su_ClpX"/>
</dbReference>
<dbReference type="InterPro" id="IPR046425">
    <property type="entry name" value="ClpX_bact"/>
</dbReference>
<dbReference type="InterPro" id="IPR027417">
    <property type="entry name" value="P-loop_NTPase"/>
</dbReference>
<dbReference type="InterPro" id="IPR010603">
    <property type="entry name" value="Znf_CppX_C4"/>
</dbReference>
<dbReference type="InterPro" id="IPR038366">
    <property type="entry name" value="Znf_CppX_C4_sf"/>
</dbReference>
<dbReference type="NCBIfam" id="TIGR00382">
    <property type="entry name" value="clpX"/>
    <property type="match status" value="1"/>
</dbReference>
<dbReference type="NCBIfam" id="NF003745">
    <property type="entry name" value="PRK05342.1"/>
    <property type="match status" value="1"/>
</dbReference>
<dbReference type="PANTHER" id="PTHR48102:SF7">
    <property type="entry name" value="ATP-DEPENDENT CLP PROTEASE ATP-BINDING SUBUNIT CLPX-LIKE, MITOCHONDRIAL"/>
    <property type="match status" value="1"/>
</dbReference>
<dbReference type="PANTHER" id="PTHR48102">
    <property type="entry name" value="ATP-DEPENDENT CLP PROTEASE ATP-BINDING SUBUNIT CLPX-LIKE, MITOCHONDRIAL-RELATED"/>
    <property type="match status" value="1"/>
</dbReference>
<dbReference type="Pfam" id="PF07724">
    <property type="entry name" value="AAA_2"/>
    <property type="match status" value="1"/>
</dbReference>
<dbReference type="Pfam" id="PF10431">
    <property type="entry name" value="ClpB_D2-small"/>
    <property type="match status" value="1"/>
</dbReference>
<dbReference type="Pfam" id="PF06689">
    <property type="entry name" value="zf-C4_ClpX"/>
    <property type="match status" value="1"/>
</dbReference>
<dbReference type="SMART" id="SM00382">
    <property type="entry name" value="AAA"/>
    <property type="match status" value="1"/>
</dbReference>
<dbReference type="SMART" id="SM01086">
    <property type="entry name" value="ClpB_D2-small"/>
    <property type="match status" value="1"/>
</dbReference>
<dbReference type="SMART" id="SM00994">
    <property type="entry name" value="zf-C4_ClpX"/>
    <property type="match status" value="1"/>
</dbReference>
<dbReference type="SUPFAM" id="SSF57716">
    <property type="entry name" value="Glucocorticoid receptor-like (DNA-binding domain)"/>
    <property type="match status" value="1"/>
</dbReference>
<dbReference type="SUPFAM" id="SSF52540">
    <property type="entry name" value="P-loop containing nucleoside triphosphate hydrolases"/>
    <property type="match status" value="1"/>
</dbReference>
<dbReference type="PROSITE" id="PS51902">
    <property type="entry name" value="CLPX_ZB"/>
    <property type="match status" value="1"/>
</dbReference>
<proteinExistence type="inferred from homology"/>
<accession>Q7NDN9</accession>
<keyword id="KW-0067">ATP-binding</keyword>
<keyword id="KW-0143">Chaperone</keyword>
<keyword id="KW-0479">Metal-binding</keyword>
<keyword id="KW-0547">Nucleotide-binding</keyword>
<keyword id="KW-1185">Reference proteome</keyword>
<keyword id="KW-0862">Zinc</keyword>
<name>CLPX_GLOVI</name>
<sequence>MPKYDSHLKCSFCGKSQEQVRKLIAGPGVYICDECVELCNEILDEELFEGATQPQPQPTKVKASRSSRRDTSLKKIPKPQEIKSYLDQHVIGQQEAKKILSVAVYNHYKRLSSKLEESGDEVEIQKSNILLIGPTGCGKTLLAQTLADLLDVPFAIADATTLTEAGYVGEDVENILLRLLQVADGEVERAQRGIIYIDEIDKIARKSENPSITRDVSGEGVQQALLKMLEGTVANVPPQGGRKHPYQEYIQIDTANILFVCGGAFVGLERVVEQRIGKRAMGFVQAGEPQKREQRLVESLKALEPDDLVKFGLIPEFIGRIPMVAVLEPLDEEALIEILTEPKNALLKQYQRLLRMDGVEMVFEPDAIKTIAQEAFRRKTGARALRGIVEELMLEVMYEVPSRADIRKCVITREMVEKRSTSELLILPSSLPKPESA</sequence>
<reference key="1">
    <citation type="journal article" date="2003" name="DNA Res.">
        <title>Complete genome structure of Gloeobacter violaceus PCC 7421, a cyanobacterium that lacks thylakoids.</title>
        <authorList>
            <person name="Nakamura Y."/>
            <person name="Kaneko T."/>
            <person name="Sato S."/>
            <person name="Mimuro M."/>
            <person name="Miyashita H."/>
            <person name="Tsuchiya T."/>
            <person name="Sasamoto S."/>
            <person name="Watanabe A."/>
            <person name="Kawashima K."/>
            <person name="Kishida Y."/>
            <person name="Kiyokawa C."/>
            <person name="Kohara M."/>
            <person name="Matsumoto M."/>
            <person name="Matsuno A."/>
            <person name="Nakazaki N."/>
            <person name="Shimpo S."/>
            <person name="Takeuchi C."/>
            <person name="Yamada M."/>
            <person name="Tabata S."/>
        </authorList>
    </citation>
    <scope>NUCLEOTIDE SEQUENCE [LARGE SCALE GENOMIC DNA]</scope>
    <source>
        <strain>ATCC 29082 / PCC 7421</strain>
    </source>
</reference>
<comment type="function">
    <text evidence="1">ATP-dependent specificity component of the Clp protease. It directs the protease to specific substrates. Can perform chaperone functions in the absence of ClpP.</text>
</comment>
<comment type="subunit">
    <text evidence="1">Component of the ClpX-ClpP complex. Forms a hexameric ring that, in the presence of ATP, binds to fourteen ClpP subunits assembled into a disk-like structure with a central cavity, resembling the structure of eukaryotic proteasomes.</text>
</comment>
<comment type="similarity">
    <text evidence="1">Belongs to the ClpX chaperone family.</text>
</comment>
<evidence type="ECO:0000255" key="1">
    <source>
        <dbReference type="HAMAP-Rule" id="MF_00175"/>
    </source>
</evidence>
<evidence type="ECO:0000255" key="2">
    <source>
        <dbReference type="PROSITE-ProRule" id="PRU01250"/>
    </source>
</evidence>
<evidence type="ECO:0000256" key="3">
    <source>
        <dbReference type="SAM" id="MobiDB-lite"/>
    </source>
</evidence>
<gene>
    <name evidence="1" type="primary">clpX</name>
    <name type="ordered locus">glr4196</name>
</gene>